<reference key="1">
    <citation type="journal article" date="2006" name="Proc. Natl. Acad. Sci. U.S.A.">
        <title>Comparative genomics of the lactic acid bacteria.</title>
        <authorList>
            <person name="Makarova K.S."/>
            <person name="Slesarev A."/>
            <person name="Wolf Y.I."/>
            <person name="Sorokin A."/>
            <person name="Mirkin B."/>
            <person name="Koonin E.V."/>
            <person name="Pavlov A."/>
            <person name="Pavlova N."/>
            <person name="Karamychev V."/>
            <person name="Polouchine N."/>
            <person name="Shakhova V."/>
            <person name="Grigoriev I."/>
            <person name="Lou Y."/>
            <person name="Rohksar D."/>
            <person name="Lucas S."/>
            <person name="Huang K."/>
            <person name="Goodstein D.M."/>
            <person name="Hawkins T."/>
            <person name="Plengvidhya V."/>
            <person name="Welker D."/>
            <person name="Hughes J."/>
            <person name="Goh Y."/>
            <person name="Benson A."/>
            <person name="Baldwin K."/>
            <person name="Lee J.-H."/>
            <person name="Diaz-Muniz I."/>
            <person name="Dosti B."/>
            <person name="Smeianov V."/>
            <person name="Wechter W."/>
            <person name="Barabote R."/>
            <person name="Lorca G."/>
            <person name="Altermann E."/>
            <person name="Barrangou R."/>
            <person name="Ganesan B."/>
            <person name="Xie Y."/>
            <person name="Rawsthorne H."/>
            <person name="Tamir D."/>
            <person name="Parker C."/>
            <person name="Breidt F."/>
            <person name="Broadbent J.R."/>
            <person name="Hutkins R."/>
            <person name="O'Sullivan D."/>
            <person name="Steele J."/>
            <person name="Unlu G."/>
            <person name="Saier M.H. Jr."/>
            <person name="Klaenhammer T."/>
            <person name="Richardson P."/>
            <person name="Kozyavkin S."/>
            <person name="Weimer B.C."/>
            <person name="Mills D.A."/>
        </authorList>
    </citation>
    <scope>NUCLEOTIDE SEQUENCE [LARGE SCALE GENOMIC DNA]</scope>
    <source>
        <strain>ATCC 334 / BCRC 17002 / CCUG 31169 / CIP 107868 / KCTC 3260 / NRRL B-441</strain>
    </source>
</reference>
<organism>
    <name type="scientific">Lacticaseibacillus paracasei (strain ATCC 334 / BCRC 17002 / CCUG 31169 / CIP 107868 / KCTC 3260 / NRRL B-441)</name>
    <name type="common">Lactobacillus paracasei</name>
    <dbReference type="NCBI Taxonomy" id="321967"/>
    <lineage>
        <taxon>Bacteria</taxon>
        <taxon>Bacillati</taxon>
        <taxon>Bacillota</taxon>
        <taxon>Bacilli</taxon>
        <taxon>Lactobacillales</taxon>
        <taxon>Lactobacillaceae</taxon>
        <taxon>Lacticaseibacillus</taxon>
    </lineage>
</organism>
<feature type="chain" id="PRO_1000043219" description="Pantothenate kinase">
    <location>
        <begin position="1"/>
        <end position="308"/>
    </location>
</feature>
<feature type="binding site" evidence="1">
    <location>
        <begin position="91"/>
        <end position="98"/>
    </location>
    <ligand>
        <name>ATP</name>
        <dbReference type="ChEBI" id="CHEBI:30616"/>
    </ligand>
</feature>
<gene>
    <name evidence="1" type="primary">coaA</name>
    <name type="ordered locus">LSEI_1980</name>
</gene>
<keyword id="KW-0067">ATP-binding</keyword>
<keyword id="KW-0173">Coenzyme A biosynthesis</keyword>
<keyword id="KW-0963">Cytoplasm</keyword>
<keyword id="KW-0418">Kinase</keyword>
<keyword id="KW-0547">Nucleotide-binding</keyword>
<keyword id="KW-1185">Reference proteome</keyword>
<keyword id="KW-0808">Transferase</keyword>
<evidence type="ECO:0000255" key="1">
    <source>
        <dbReference type="HAMAP-Rule" id="MF_00215"/>
    </source>
</evidence>
<comment type="catalytic activity">
    <reaction evidence="1">
        <text>(R)-pantothenate + ATP = (R)-4'-phosphopantothenate + ADP + H(+)</text>
        <dbReference type="Rhea" id="RHEA:16373"/>
        <dbReference type="ChEBI" id="CHEBI:10986"/>
        <dbReference type="ChEBI" id="CHEBI:15378"/>
        <dbReference type="ChEBI" id="CHEBI:29032"/>
        <dbReference type="ChEBI" id="CHEBI:30616"/>
        <dbReference type="ChEBI" id="CHEBI:456216"/>
        <dbReference type="EC" id="2.7.1.33"/>
    </reaction>
</comment>
<comment type="pathway">
    <text evidence="1">Cofactor biosynthesis; coenzyme A biosynthesis; CoA from (R)-pantothenate: step 1/5.</text>
</comment>
<comment type="subcellular location">
    <subcellularLocation>
        <location evidence="1">Cytoplasm</location>
    </subcellularLocation>
</comment>
<comment type="similarity">
    <text evidence="1">Belongs to the prokaryotic pantothenate kinase family.</text>
</comment>
<proteinExistence type="inferred from homology"/>
<name>COAA_LACP3</name>
<protein>
    <recommendedName>
        <fullName evidence="1">Pantothenate kinase</fullName>
        <ecNumber evidence="1">2.7.1.33</ecNumber>
    </recommendedName>
    <alternativeName>
        <fullName evidence="1">Pantothenic acid kinase</fullName>
    </alternativeName>
</protein>
<sequence>MQSEMNYYKFDRAEWSQFHSQNFTNVTDEELAQLRSLNDEISLDDVKMIYSPLRHLIHIRYEDYQGDMFTLSRFLGMQRNPHTPFIIGIAGSVAVGKSTTARLLQLLLSRAYPEKRVQQMTTDGFLYPNAELERRGILDRKGFPESYDMELLIHFMNNVKNASGALRAPKYSHQIYDIVPGEYELIDRPDILIVEGINVLQLPSKQPIYVSDYFDFSIYVDANPDLIEQWYLERFGILLDTAFTDPNNYYYQYAIGDRADAFAMARQVWRDVNLKNLNEYILPTKNRADIILHKTTGHEIDQVSLRKW</sequence>
<dbReference type="EC" id="2.7.1.33" evidence="1"/>
<dbReference type="EMBL" id="CP000423">
    <property type="protein sequence ID" value="ABJ70738.1"/>
    <property type="molecule type" value="Genomic_DNA"/>
</dbReference>
<dbReference type="RefSeq" id="WP_003566294.1">
    <property type="nucleotide sequence ID" value="NC_008526.1"/>
</dbReference>
<dbReference type="RefSeq" id="YP_807180.1">
    <property type="nucleotide sequence ID" value="NC_008526.1"/>
</dbReference>
<dbReference type="SMR" id="Q036Y4"/>
<dbReference type="STRING" id="321967.LSEI_1980"/>
<dbReference type="PaxDb" id="321967-LSEI_1980"/>
<dbReference type="GeneID" id="57090608"/>
<dbReference type="KEGG" id="lca:LSEI_1980"/>
<dbReference type="PATRIC" id="fig|321967.11.peg.1944"/>
<dbReference type="HOGENOM" id="CLU_053818_1_1_9"/>
<dbReference type="UniPathway" id="UPA00241">
    <property type="reaction ID" value="UER00352"/>
</dbReference>
<dbReference type="Proteomes" id="UP000001651">
    <property type="component" value="Chromosome"/>
</dbReference>
<dbReference type="GO" id="GO:0005737">
    <property type="term" value="C:cytoplasm"/>
    <property type="evidence" value="ECO:0007669"/>
    <property type="project" value="UniProtKB-SubCell"/>
</dbReference>
<dbReference type="GO" id="GO:0005524">
    <property type="term" value="F:ATP binding"/>
    <property type="evidence" value="ECO:0007669"/>
    <property type="project" value="UniProtKB-UniRule"/>
</dbReference>
<dbReference type="GO" id="GO:0004594">
    <property type="term" value="F:pantothenate kinase activity"/>
    <property type="evidence" value="ECO:0007669"/>
    <property type="project" value="UniProtKB-UniRule"/>
</dbReference>
<dbReference type="GO" id="GO:0015937">
    <property type="term" value="P:coenzyme A biosynthetic process"/>
    <property type="evidence" value="ECO:0007669"/>
    <property type="project" value="UniProtKB-UniRule"/>
</dbReference>
<dbReference type="CDD" id="cd02025">
    <property type="entry name" value="PanK"/>
    <property type="match status" value="1"/>
</dbReference>
<dbReference type="Gene3D" id="3.40.50.300">
    <property type="entry name" value="P-loop containing nucleotide triphosphate hydrolases"/>
    <property type="match status" value="1"/>
</dbReference>
<dbReference type="HAMAP" id="MF_00215">
    <property type="entry name" value="Pantothen_kinase_1"/>
    <property type="match status" value="1"/>
</dbReference>
<dbReference type="InterPro" id="IPR027417">
    <property type="entry name" value="P-loop_NTPase"/>
</dbReference>
<dbReference type="InterPro" id="IPR004566">
    <property type="entry name" value="PanK"/>
</dbReference>
<dbReference type="InterPro" id="IPR006083">
    <property type="entry name" value="PRK/URK"/>
</dbReference>
<dbReference type="NCBIfam" id="TIGR00554">
    <property type="entry name" value="panK_bact"/>
    <property type="match status" value="1"/>
</dbReference>
<dbReference type="PANTHER" id="PTHR10285">
    <property type="entry name" value="URIDINE KINASE"/>
    <property type="match status" value="1"/>
</dbReference>
<dbReference type="Pfam" id="PF00485">
    <property type="entry name" value="PRK"/>
    <property type="match status" value="1"/>
</dbReference>
<dbReference type="PIRSF" id="PIRSF000545">
    <property type="entry name" value="Pantothenate_kin"/>
    <property type="match status" value="1"/>
</dbReference>
<dbReference type="SUPFAM" id="SSF52540">
    <property type="entry name" value="P-loop containing nucleoside triphosphate hydrolases"/>
    <property type="match status" value="1"/>
</dbReference>
<accession>Q036Y4</accession>